<keyword id="KW-0732">Signal</keyword>
<organism>
    <name type="scientific">Saccharomyces cerevisiae (strain ATCC 204508 / S288c)</name>
    <name type="common">Baker's yeast</name>
    <dbReference type="NCBI Taxonomy" id="559292"/>
    <lineage>
        <taxon>Eukaryota</taxon>
        <taxon>Fungi</taxon>
        <taxon>Dikarya</taxon>
        <taxon>Ascomycota</taxon>
        <taxon>Saccharomycotina</taxon>
        <taxon>Saccharomycetes</taxon>
        <taxon>Saccharomycetales</taxon>
        <taxon>Saccharomycetaceae</taxon>
        <taxon>Saccharomyces</taxon>
    </lineage>
</organism>
<protein>
    <recommendedName>
        <fullName>Putative uncharacterized protein YFR034W-A</fullName>
    </recommendedName>
</protein>
<evidence type="ECO:0000255" key="1"/>
<evidence type="ECO:0000305" key="2"/>
<evidence type="ECO:0000305" key="3">
    <source>
    </source>
</evidence>
<accession>Q8TGR2</accession>
<comment type="miscellaneous">
    <text evidence="2">Partially overlaps YFR035C.</text>
</comment>
<comment type="caution">
    <text evidence="3">Product of a dubious gene prediction unlikely to encode a functional protein. Because of that it is not part of the S.cerevisiae S288c complete/reference proteome set.</text>
</comment>
<sequence length="95" mass="11341">MTSSLVIYIFLWSRLICQIFPCERPGQPFAYHILGEAKKKKNRKRENRTCSIGNTCTQTYTYTPYAKKARQQEKLWERRNERTYGANSQQTFEHT</sequence>
<reference key="1">
    <citation type="journal article" date="1995" name="Nat. Genet.">
        <title>Analysis of the nucleotide sequence of chromosome VI from Saccharomyces cerevisiae.</title>
        <authorList>
            <person name="Murakami Y."/>
            <person name="Naitou M."/>
            <person name="Hagiwara H."/>
            <person name="Shibata T."/>
            <person name="Ozawa M."/>
            <person name="Sasanuma S."/>
            <person name="Sasanuma M."/>
            <person name="Tsuchiya Y."/>
            <person name="Soeda E."/>
            <person name="Yokoyama K."/>
            <person name="Yamazaki M."/>
            <person name="Tashiro H."/>
            <person name="Eki T."/>
        </authorList>
    </citation>
    <scope>NUCLEOTIDE SEQUENCE [LARGE SCALE GENOMIC DNA]</scope>
    <source>
        <strain>ATCC 204508 / S288c</strain>
    </source>
</reference>
<reference key="2">
    <citation type="journal article" date="2014" name="G3 (Bethesda)">
        <title>The reference genome sequence of Saccharomyces cerevisiae: Then and now.</title>
        <authorList>
            <person name="Engel S.R."/>
            <person name="Dietrich F.S."/>
            <person name="Fisk D.G."/>
            <person name="Binkley G."/>
            <person name="Balakrishnan R."/>
            <person name="Costanzo M.C."/>
            <person name="Dwight S.S."/>
            <person name="Hitz B.C."/>
            <person name="Karra K."/>
            <person name="Nash R.S."/>
            <person name="Weng S."/>
            <person name="Wong E.D."/>
            <person name="Lloyd P."/>
            <person name="Skrzypek M.S."/>
            <person name="Miyasato S.R."/>
            <person name="Simison M."/>
            <person name="Cherry J.M."/>
        </authorList>
    </citation>
    <scope>GENOME REANNOTATION</scope>
    <source>
        <strain>ATCC 204508 / S288c</strain>
    </source>
</reference>
<reference key="3">
    <citation type="journal article" date="2002" name="Nat. Biotechnol.">
        <title>An integrated approach for finding overlooked genes in yeast.</title>
        <authorList>
            <person name="Kumar A."/>
            <person name="Harrison P.M."/>
            <person name="Cheung K.-H."/>
            <person name="Lan N."/>
            <person name="Echols N."/>
            <person name="Bertone P."/>
            <person name="Miller P."/>
            <person name="Gerstein M.B."/>
            <person name="Snyder M."/>
        </authorList>
    </citation>
    <scope>NUCLEOTIDE SEQUENCE [GENOMIC DNA]</scope>
</reference>
<name>YF034_YEAST</name>
<dbReference type="EMBL" id="D50617">
    <property type="status" value="NOT_ANNOTATED_CDS"/>
    <property type="molecule type" value="Genomic_DNA"/>
</dbReference>
<dbReference type="EMBL" id="AF479924">
    <property type="protein sequence ID" value="AAL79237.1"/>
    <property type="molecule type" value="Genomic_DNA"/>
</dbReference>
<dbReference type="SMR" id="Q8TGR2"/>
<dbReference type="PaxDb" id="4932-YFR034W-A"/>
<dbReference type="EnsemblFungi" id="YFR034W-A_mRNA">
    <property type="protein sequence ID" value="YFR034W-A"/>
    <property type="gene ID" value="YFR034W-A"/>
</dbReference>
<dbReference type="AGR" id="SGD:S000028631"/>
<dbReference type="SGD" id="S000028631">
    <property type="gene designation" value="YFR034W-A"/>
</dbReference>
<dbReference type="HOGENOM" id="CLU_2374388_0_0_1"/>
<proteinExistence type="uncertain"/>
<gene>
    <name type="ordered locus">YFR034W-A</name>
</gene>
<feature type="signal peptide" evidence="1">
    <location>
        <begin position="1"/>
        <end position="17"/>
    </location>
</feature>
<feature type="chain" id="PRO_0000299919" description="Putative uncharacterized protein YFR034W-A">
    <location>
        <begin position="18"/>
        <end position="95"/>
    </location>
</feature>